<gene>
    <name evidence="1" type="primary">hisA</name>
    <name type="ordered locus">SERP2302</name>
</gene>
<sequence>MIDLWPAIDLINSTSVRLTEGKYDSKEKMEKSVEDSIRFYSQFKCVKRIHIVDLIGAKAKEVKEFDYIRSLRKLTTKPIEVGGGIRSKQTIENYIHSGIDYCIVGTKGIQDIEWLTHMTHQFPNKLYLSVDAFGEKIKINGWKEDAKLNLFDYVAKIEHLPLGGVIYTDISKDGKLSGPNFDLTGRLALYTSLPVIASGGIRHQEDLFRLESLNVHAAIVGKAAHLDEFWEGLS</sequence>
<organism>
    <name type="scientific">Staphylococcus epidermidis (strain ATCC 35984 / DSM 28319 / BCRC 17069 / CCUG 31568 / BM 3577 / RP62A)</name>
    <dbReference type="NCBI Taxonomy" id="176279"/>
    <lineage>
        <taxon>Bacteria</taxon>
        <taxon>Bacillati</taxon>
        <taxon>Bacillota</taxon>
        <taxon>Bacilli</taxon>
        <taxon>Bacillales</taxon>
        <taxon>Staphylococcaceae</taxon>
        <taxon>Staphylococcus</taxon>
    </lineage>
</organism>
<reference key="1">
    <citation type="journal article" date="2005" name="J. Bacteriol.">
        <title>Insights on evolution of virulence and resistance from the complete genome analysis of an early methicillin-resistant Staphylococcus aureus strain and a biofilm-producing methicillin-resistant Staphylococcus epidermidis strain.</title>
        <authorList>
            <person name="Gill S.R."/>
            <person name="Fouts D.E."/>
            <person name="Archer G.L."/>
            <person name="Mongodin E.F."/>
            <person name="DeBoy R.T."/>
            <person name="Ravel J."/>
            <person name="Paulsen I.T."/>
            <person name="Kolonay J.F."/>
            <person name="Brinkac L.M."/>
            <person name="Beanan M.J."/>
            <person name="Dodson R.J."/>
            <person name="Daugherty S.C."/>
            <person name="Madupu R."/>
            <person name="Angiuoli S.V."/>
            <person name="Durkin A.S."/>
            <person name="Haft D.H."/>
            <person name="Vamathevan J.J."/>
            <person name="Khouri H."/>
            <person name="Utterback T.R."/>
            <person name="Lee C."/>
            <person name="Dimitrov G."/>
            <person name="Jiang L."/>
            <person name="Qin H."/>
            <person name="Weidman J."/>
            <person name="Tran K."/>
            <person name="Kang K.H."/>
            <person name="Hance I.R."/>
            <person name="Nelson K.E."/>
            <person name="Fraser C.M."/>
        </authorList>
    </citation>
    <scope>NUCLEOTIDE SEQUENCE [LARGE SCALE GENOMIC DNA]</scope>
    <source>
        <strain>ATCC 35984 / DSM 28319 / BCRC 17069 / CCUG 31568 / BM 3577 / RP62A</strain>
    </source>
</reference>
<accession>Q5HKP1</accession>
<name>HIS4_STAEQ</name>
<keyword id="KW-0028">Amino-acid biosynthesis</keyword>
<keyword id="KW-0963">Cytoplasm</keyword>
<keyword id="KW-0368">Histidine biosynthesis</keyword>
<keyword id="KW-0413">Isomerase</keyword>
<keyword id="KW-1185">Reference proteome</keyword>
<dbReference type="EC" id="5.3.1.16" evidence="1"/>
<dbReference type="EMBL" id="CP000029">
    <property type="protein sequence ID" value="AAW53199.1"/>
    <property type="molecule type" value="Genomic_DNA"/>
</dbReference>
<dbReference type="RefSeq" id="WP_002470280.1">
    <property type="nucleotide sequence ID" value="NC_002976.3"/>
</dbReference>
<dbReference type="SMR" id="Q5HKP1"/>
<dbReference type="STRING" id="176279.SERP2302"/>
<dbReference type="KEGG" id="ser:SERP2302"/>
<dbReference type="eggNOG" id="COG0106">
    <property type="taxonomic scope" value="Bacteria"/>
</dbReference>
<dbReference type="HOGENOM" id="CLU_048577_1_2_9"/>
<dbReference type="UniPathway" id="UPA00031">
    <property type="reaction ID" value="UER00009"/>
</dbReference>
<dbReference type="Proteomes" id="UP000000531">
    <property type="component" value="Chromosome"/>
</dbReference>
<dbReference type="GO" id="GO:0005737">
    <property type="term" value="C:cytoplasm"/>
    <property type="evidence" value="ECO:0007669"/>
    <property type="project" value="UniProtKB-SubCell"/>
</dbReference>
<dbReference type="GO" id="GO:0003949">
    <property type="term" value="F:1-(5-phosphoribosyl)-5-[(5-phosphoribosylamino)methylideneamino]imidazole-4-carboxamide isomerase activity"/>
    <property type="evidence" value="ECO:0007669"/>
    <property type="project" value="UniProtKB-UniRule"/>
</dbReference>
<dbReference type="GO" id="GO:0000105">
    <property type="term" value="P:L-histidine biosynthetic process"/>
    <property type="evidence" value="ECO:0007669"/>
    <property type="project" value="UniProtKB-UniRule"/>
</dbReference>
<dbReference type="GO" id="GO:0000162">
    <property type="term" value="P:L-tryptophan biosynthetic process"/>
    <property type="evidence" value="ECO:0007669"/>
    <property type="project" value="TreeGrafter"/>
</dbReference>
<dbReference type="CDD" id="cd04732">
    <property type="entry name" value="HisA"/>
    <property type="match status" value="1"/>
</dbReference>
<dbReference type="Gene3D" id="3.20.20.70">
    <property type="entry name" value="Aldolase class I"/>
    <property type="match status" value="1"/>
</dbReference>
<dbReference type="HAMAP" id="MF_01014">
    <property type="entry name" value="HisA"/>
    <property type="match status" value="1"/>
</dbReference>
<dbReference type="InterPro" id="IPR013785">
    <property type="entry name" value="Aldolase_TIM"/>
</dbReference>
<dbReference type="InterPro" id="IPR006062">
    <property type="entry name" value="His_biosynth"/>
</dbReference>
<dbReference type="InterPro" id="IPR006063">
    <property type="entry name" value="HisA_bact_arch"/>
</dbReference>
<dbReference type="InterPro" id="IPR044524">
    <property type="entry name" value="Isoase_HisA-like"/>
</dbReference>
<dbReference type="InterPro" id="IPR023016">
    <property type="entry name" value="Isoase_HisA-like_bact"/>
</dbReference>
<dbReference type="InterPro" id="IPR011060">
    <property type="entry name" value="RibuloseP-bd_barrel"/>
</dbReference>
<dbReference type="NCBIfam" id="TIGR00007">
    <property type="entry name" value="1-(5-phosphoribosyl)-5-[(5-phosphoribosylamino)methylideneamino]imidazole-4-carboxamide isomerase"/>
    <property type="match status" value="1"/>
</dbReference>
<dbReference type="NCBIfam" id="NF010114">
    <property type="entry name" value="PRK13587.1"/>
    <property type="match status" value="1"/>
</dbReference>
<dbReference type="PANTHER" id="PTHR43090">
    <property type="entry name" value="1-(5-PHOSPHORIBOSYL)-5-[(5-PHOSPHORIBOSYLAMINO)METHYLIDENEAMINO] IMIDAZOLE-4-CARBOXAMIDE ISOMERASE"/>
    <property type="match status" value="1"/>
</dbReference>
<dbReference type="PANTHER" id="PTHR43090:SF2">
    <property type="entry name" value="1-(5-PHOSPHORIBOSYL)-5-[(5-PHOSPHORIBOSYLAMINO)METHYLIDENEAMINO] IMIDAZOLE-4-CARBOXAMIDE ISOMERASE"/>
    <property type="match status" value="1"/>
</dbReference>
<dbReference type="Pfam" id="PF00977">
    <property type="entry name" value="His_biosynth"/>
    <property type="match status" value="1"/>
</dbReference>
<dbReference type="SUPFAM" id="SSF51366">
    <property type="entry name" value="Ribulose-phoshate binding barrel"/>
    <property type="match status" value="1"/>
</dbReference>
<evidence type="ECO:0000255" key="1">
    <source>
        <dbReference type="HAMAP-Rule" id="MF_01014"/>
    </source>
</evidence>
<proteinExistence type="inferred from homology"/>
<comment type="catalytic activity">
    <reaction evidence="1">
        <text>1-(5-phospho-beta-D-ribosyl)-5-[(5-phospho-beta-D-ribosylamino)methylideneamino]imidazole-4-carboxamide = 5-[(5-phospho-1-deoxy-D-ribulos-1-ylimino)methylamino]-1-(5-phospho-beta-D-ribosyl)imidazole-4-carboxamide</text>
        <dbReference type="Rhea" id="RHEA:15469"/>
        <dbReference type="ChEBI" id="CHEBI:58435"/>
        <dbReference type="ChEBI" id="CHEBI:58525"/>
        <dbReference type="EC" id="5.3.1.16"/>
    </reaction>
</comment>
<comment type="pathway">
    <text evidence="1">Amino-acid biosynthesis; L-histidine biosynthesis; L-histidine from 5-phospho-alpha-D-ribose 1-diphosphate: step 4/9.</text>
</comment>
<comment type="subcellular location">
    <subcellularLocation>
        <location evidence="1">Cytoplasm</location>
    </subcellularLocation>
</comment>
<comment type="similarity">
    <text evidence="1">Belongs to the HisA/HisF family.</text>
</comment>
<feature type="chain" id="PRO_0000142059" description="1-(5-phosphoribosyl)-5-[(5-phosphoribosylamino)methylideneamino] imidazole-4-carboxamide isomerase">
    <location>
        <begin position="1"/>
        <end position="234"/>
    </location>
</feature>
<feature type="active site" description="Proton acceptor" evidence="1">
    <location>
        <position position="9"/>
    </location>
</feature>
<feature type="active site" description="Proton donor" evidence="1">
    <location>
        <position position="131"/>
    </location>
</feature>
<protein>
    <recommendedName>
        <fullName evidence="1">1-(5-phosphoribosyl)-5-[(5-phosphoribosylamino)methylideneamino] imidazole-4-carboxamide isomerase</fullName>
        <ecNumber evidence="1">5.3.1.16</ecNumber>
    </recommendedName>
    <alternativeName>
        <fullName evidence="1">Phosphoribosylformimino-5-aminoimidazole carboxamide ribotide isomerase</fullName>
    </alternativeName>
</protein>